<organism>
    <name type="scientific">Corallina pilulifera</name>
    <name type="common">Red coralline alga</name>
    <dbReference type="NCBI Taxonomy" id="78447"/>
    <lineage>
        <taxon>Eukaryota</taxon>
        <taxon>Rhodophyta</taxon>
        <taxon>Florideophyceae</taxon>
        <taxon>Corallinophycidae</taxon>
        <taxon>Corallinales</taxon>
        <taxon>Corallinaceae</taxon>
        <taxon>Corallinoideae</taxon>
        <taxon>Corallina</taxon>
    </lineage>
</organism>
<sequence>MGIPADNLQSRAKASFDTRVAAAELALNRGVVPSFANGEELLYRNPDPDNTDPSFIASFTKGLPHDDNGAIIDPDDFLAFVRAINSGDEKEIADLTLGPARDPETGLPIWRSDLANSLELEVRGWENSSAGLTFDLEGPDAQSIAMPPAPVLTSPELVAEIAELYLMALGREIEFSEFDSPKNAEYIQFAIDQLNGLEWFNTPAKLGDPPAEIRRRRGEVTVGNLFRGILPGSEVGPYLSQYIIVGSKQIGSATVGNKTLVSPNAADEFDGEIAYGSITISQRVRIATPGRDFMTDLKVFLDVQDAADFRGFESYEPGARLIRTIRDLATWVHFDALYEAYLNACLILLANGVPFDPNLPFQQEDKLDNQDVFVNFGSAHVLSLVTEVATRALKAVRYQKFNIHRRLRPEATGGLISVNKIAPQKGESIFPEVDLAVEELGDILEKAEISNRKQNIADGDPDPDPSFLLPMAFAEGSPFHPSYGSGHAVVAGACVTILKAFFDSGIEIDQVFEVDKDEDKLVKSSFKGTLTVAGELNKLADNIAIGRNMAGVHYFSDQFESLLLGEQVAIGILEEQSLTYGENFFFNLPKFDGTTIQI</sequence>
<reference key="1">
    <citation type="journal article" date="1998" name="FEBS Lett.">
        <title>Cloning and expression of the gene for a vanadium-dependent bromoperoxidase from a marine macro-alga, Corallina pilulifera.</title>
        <authorList>
            <person name="Shimonishi M."/>
            <person name="Kuwamoto S."/>
            <person name="Inoue H."/>
            <person name="Wever R."/>
            <person name="Ohshiro T."/>
            <person name="Izumi Y."/>
            <person name="Tanabe T."/>
        </authorList>
    </citation>
    <scope>NUCLEOTIDE SEQUENCE [MRNA]</scope>
</reference>
<reference evidence="5" key="2">
    <citation type="journal article" date="2005" name="J. Biol. Inorg. Chem.">
        <title>Enhancing effect of calcium and vanadium ions on thermal stability of bromoperoxidase from Corallina pilulifera.</title>
        <authorList>
            <person name="Garcia-Rodriguez E."/>
            <person name="Ohshiro T."/>
            <person name="Aibara T."/>
            <person name="Izumi Y."/>
            <person name="Littlechild J."/>
        </authorList>
    </citation>
    <scope>X-RAY CRYSTALLOGRAPHY (2.2 ANGSTROMS) IN COMPLEX WITH CALCIUM AND PHOSPHATE</scope>
    <scope>FUNCTION</scope>
    <scope>CATALYTIC ACTIVITY</scope>
    <scope>COFACTOR</scope>
    <scope>ENZYME STABILITY</scope>
</reference>
<keyword id="KW-0002">3D-structure</keyword>
<keyword id="KW-0479">Metal-binding</keyword>
<keyword id="KW-0560">Oxidoreductase</keyword>
<keyword id="KW-0575">Peroxidase</keyword>
<keyword id="KW-0837">Vanadium</keyword>
<dbReference type="EC" id="1.11.1.18"/>
<dbReference type="EMBL" id="D87657">
    <property type="protein sequence ID" value="BAA31261.1"/>
    <property type="molecule type" value="mRNA"/>
</dbReference>
<dbReference type="PDB" id="1UP8">
    <property type="method" value="X-ray"/>
    <property type="resolution" value="2.20 A"/>
    <property type="chains" value="A/B/C/D=1-598"/>
</dbReference>
<dbReference type="PDB" id="7QVW">
    <property type="method" value="X-ray"/>
    <property type="resolution" value="1.92 A"/>
    <property type="chains" value="AAA/BBB/CCC/DDD=1-598"/>
</dbReference>
<dbReference type="PDB" id="7QW3">
    <property type="method" value="X-ray"/>
    <property type="resolution" value="1.78 A"/>
    <property type="chains" value="AAA/BBB/CCC/DDD=1-598"/>
</dbReference>
<dbReference type="PDB" id="7QWI">
    <property type="method" value="X-ray"/>
    <property type="resolution" value="2.15 A"/>
    <property type="chains" value="AAA/BBB/CCC/DDD=1-598"/>
</dbReference>
<dbReference type="PDB" id="7QYY">
    <property type="method" value="X-ray"/>
    <property type="resolution" value="2.00 A"/>
    <property type="chains" value="AAA/BBB/CCC/DDD=1-598"/>
</dbReference>
<dbReference type="PDB" id="8VGX">
    <property type="method" value="EM"/>
    <property type="resolution" value="2.19 A"/>
    <property type="chains" value="A/B=1-598"/>
</dbReference>
<dbReference type="PDB" id="8VH0">
    <property type="method" value="EM"/>
    <property type="resolution" value="2.30 A"/>
    <property type="chains" value="A/B=1-598"/>
</dbReference>
<dbReference type="PDB" id="8VIX">
    <property type="method" value="EM"/>
    <property type="resolution" value="2.31 A"/>
    <property type="chains" value="A/B=1-598"/>
</dbReference>
<dbReference type="PDB" id="8VJQ">
    <property type="method" value="EM"/>
    <property type="resolution" value="3.20 A"/>
    <property type="chains" value="A/B=1-598"/>
</dbReference>
<dbReference type="PDBsum" id="1UP8"/>
<dbReference type="PDBsum" id="7QVW"/>
<dbReference type="PDBsum" id="7QW3"/>
<dbReference type="PDBsum" id="7QWI"/>
<dbReference type="PDBsum" id="7QYY"/>
<dbReference type="PDBsum" id="8VGX"/>
<dbReference type="PDBsum" id="8VH0"/>
<dbReference type="PDBsum" id="8VIX"/>
<dbReference type="PDBsum" id="8VJQ"/>
<dbReference type="EMDB" id="EMD-43229"/>
<dbReference type="EMDB" id="EMD-43230"/>
<dbReference type="EMDB" id="EMD-43270"/>
<dbReference type="EMDB" id="EMD-43291"/>
<dbReference type="SMR" id="O81959"/>
<dbReference type="PeroxiBase" id="5894">
    <property type="entry name" value="CpiVBPo01"/>
</dbReference>
<dbReference type="EvolutionaryTrace" id="O81959"/>
<dbReference type="GO" id="GO:0019806">
    <property type="term" value="F:bromide peroxidase activity"/>
    <property type="evidence" value="ECO:0007669"/>
    <property type="project" value="UniProtKB-EC"/>
</dbReference>
<dbReference type="GO" id="GO:0046872">
    <property type="term" value="F:metal ion binding"/>
    <property type="evidence" value="ECO:0007669"/>
    <property type="project" value="UniProtKB-KW"/>
</dbReference>
<dbReference type="CDD" id="cd03398">
    <property type="entry name" value="PAP2_haloperoxidase"/>
    <property type="match status" value="1"/>
</dbReference>
<dbReference type="Gene3D" id="1.10.606.10">
    <property type="entry name" value="Vanadium-containing Chloroperoxidase, domain 2"/>
    <property type="match status" value="1"/>
</dbReference>
<dbReference type="InterPro" id="IPR016119">
    <property type="entry name" value="Br/Cl_peroxidase_C"/>
</dbReference>
<dbReference type="InterPro" id="IPR036938">
    <property type="entry name" value="P_Acid_Pase_2/haloperoxi_sf"/>
</dbReference>
<dbReference type="InterPro" id="IPR052559">
    <property type="entry name" value="V-haloperoxidase"/>
</dbReference>
<dbReference type="PANTHER" id="PTHR34599">
    <property type="entry name" value="PEROXIDASE-RELATED"/>
    <property type="match status" value="1"/>
</dbReference>
<dbReference type="PANTHER" id="PTHR34599:SF1">
    <property type="entry name" value="PHOSPHATIDIC ACID PHOSPHATASE TYPE 2_HALOPEROXIDASE DOMAIN-CONTAINING PROTEIN"/>
    <property type="match status" value="1"/>
</dbReference>
<dbReference type="SUPFAM" id="SSF48317">
    <property type="entry name" value="Acid phosphatase/Vanadium-dependent haloperoxidase"/>
    <property type="match status" value="1"/>
</dbReference>
<comment type="function">
    <text evidence="3">Catalyzes the halogenation of organic substrates in the presence of hydrogen peroxide.</text>
</comment>
<comment type="catalytic activity">
    <reaction evidence="3">
        <text>RH + Br(-) + H2O2 = RBr + 2 H2O.</text>
        <dbReference type="EC" id="1.11.1.18"/>
    </reaction>
</comment>
<comment type="cofactor">
    <cofactor evidence="3">
        <name>Ca(2+)</name>
        <dbReference type="ChEBI" id="CHEBI:29108"/>
    </cofactor>
    <text evidence="3">Binds 1 Ca(2+) ion per subunit. The binding is important for enzyme stability.</text>
</comment>
<comment type="cofactor">
    <cofactor evidence="3">
        <name>vanadate</name>
        <dbReference type="ChEBI" id="CHEBI:35169"/>
    </cofactor>
    <text evidence="3">Binds 1 vanadate ion per subunit.</text>
</comment>
<comment type="subunit">
    <text evidence="3">Homododecamer.</text>
</comment>
<comment type="similarity">
    <text evidence="4">Belongs to the vanadium-dependent haloperoxidase family.</text>
</comment>
<protein>
    <recommendedName>
        <fullName>Vanadium-dependent bromoperoxidase</fullName>
        <shortName>V-BPO</shortName>
        <ecNumber>1.11.1.18</ecNumber>
    </recommendedName>
    <alternativeName>
        <fullName>Vanadium haloperoxidase</fullName>
    </alternativeName>
</protein>
<accession>O81959</accession>
<feature type="chain" id="PRO_0000401200" description="Vanadium-dependent bromoperoxidase">
    <location>
        <begin position="1"/>
        <end position="598"/>
    </location>
</feature>
<feature type="active site" evidence="1">
    <location>
        <position position="480"/>
    </location>
</feature>
<feature type="active site" evidence="1">
    <location>
        <position position="487"/>
    </location>
</feature>
<feature type="binding site" evidence="5">
    <location>
        <position position="361"/>
    </location>
    <ligand>
        <name>Ca(2+)</name>
        <dbReference type="ChEBI" id="CHEBI:29108"/>
    </ligand>
</feature>
<feature type="binding site" evidence="5">
    <location>
        <position position="363"/>
    </location>
    <ligand>
        <name>Ca(2+)</name>
        <dbReference type="ChEBI" id="CHEBI:29108"/>
    </ligand>
</feature>
<feature type="binding site" evidence="5">
    <location>
        <position position="365"/>
    </location>
    <ligand>
        <name>Ca(2+)</name>
        <dbReference type="ChEBI" id="CHEBI:29108"/>
    </ligand>
</feature>
<feature type="binding site" evidence="5">
    <location>
        <position position="368"/>
    </location>
    <ligand>
        <name>Ca(2+)</name>
        <dbReference type="ChEBI" id="CHEBI:29108"/>
    </ligand>
</feature>
<feature type="binding site" evidence="5">
    <location>
        <position position="370"/>
    </location>
    <ligand>
        <name>Ca(2+)</name>
        <dbReference type="ChEBI" id="CHEBI:29108"/>
    </ligand>
</feature>
<feature type="binding site" evidence="2">
    <location>
        <position position="400"/>
    </location>
    <ligand>
        <name>vanadate</name>
        <dbReference type="ChEBI" id="CHEBI:35169"/>
    </ligand>
</feature>
<feature type="binding site" evidence="2">
    <location>
        <position position="408"/>
    </location>
    <ligand>
        <name>vanadate</name>
        <dbReference type="ChEBI" id="CHEBI:35169"/>
    </ligand>
</feature>
<feature type="binding site" evidence="2">
    <location>
        <position position="485"/>
    </location>
    <ligand>
        <name>vanadate</name>
        <dbReference type="ChEBI" id="CHEBI:35169"/>
    </ligand>
</feature>
<feature type="binding site" evidence="2">
    <location>
        <position position="486"/>
    </location>
    <ligand>
        <name>vanadate</name>
        <dbReference type="ChEBI" id="CHEBI:35169"/>
    </ligand>
</feature>
<feature type="binding site" evidence="2">
    <location>
        <position position="487"/>
    </location>
    <ligand>
        <name>vanadate</name>
        <dbReference type="ChEBI" id="CHEBI:35169"/>
    </ligand>
</feature>
<feature type="binding site" evidence="2">
    <location>
        <position position="547"/>
    </location>
    <ligand>
        <name>vanadate</name>
        <dbReference type="ChEBI" id="CHEBI:35169"/>
    </ligand>
</feature>
<feature type="binding site" evidence="2">
    <location>
        <position position="553"/>
    </location>
    <ligand>
        <name>vanadate</name>
        <dbReference type="ChEBI" id="CHEBI:35169"/>
    </ligand>
</feature>
<feature type="helix" evidence="6">
    <location>
        <begin position="11"/>
        <end position="28"/>
    </location>
</feature>
<feature type="helix" evidence="6">
    <location>
        <begin position="39"/>
        <end position="42"/>
    </location>
</feature>
<feature type="helix" evidence="6">
    <location>
        <begin position="74"/>
        <end position="86"/>
    </location>
</feature>
<feature type="helix" evidence="6">
    <location>
        <begin position="89"/>
        <end position="93"/>
    </location>
</feature>
<feature type="turn" evidence="6">
    <location>
        <begin position="103"/>
        <end position="105"/>
    </location>
</feature>
<feature type="helix" evidence="6">
    <location>
        <begin position="113"/>
        <end position="118"/>
    </location>
</feature>
<feature type="helix" evidence="6">
    <location>
        <begin position="130"/>
        <end position="132"/>
    </location>
</feature>
<feature type="strand" evidence="6">
    <location>
        <begin position="136"/>
        <end position="139"/>
    </location>
</feature>
<feature type="helix" evidence="6">
    <location>
        <begin position="155"/>
        <end position="169"/>
    </location>
</feature>
<feature type="turn" evidence="6">
    <location>
        <begin position="170"/>
        <end position="172"/>
    </location>
</feature>
<feature type="helix" evidence="6">
    <location>
        <begin position="175"/>
        <end position="177"/>
    </location>
</feature>
<feature type="helix" evidence="6">
    <location>
        <begin position="181"/>
        <end position="183"/>
    </location>
</feature>
<feature type="helix" evidence="6">
    <location>
        <begin position="184"/>
        <end position="195"/>
    </location>
</feature>
<feature type="helix" evidence="6">
    <location>
        <begin position="198"/>
        <end position="201"/>
    </location>
</feature>
<feature type="helix" evidence="6">
    <location>
        <begin position="210"/>
        <end position="215"/>
    </location>
</feature>
<feature type="turn" evidence="6">
    <location>
        <begin position="222"/>
        <end position="226"/>
    </location>
</feature>
<feature type="turn" evidence="6">
    <location>
        <begin position="231"/>
        <end position="234"/>
    </location>
</feature>
<feature type="helix" evidence="6">
    <location>
        <begin position="241"/>
        <end position="243"/>
    </location>
</feature>
<feature type="strand" evidence="6">
    <location>
        <begin position="253"/>
        <end position="255"/>
    </location>
</feature>
<feature type="strand" evidence="6">
    <location>
        <begin position="258"/>
        <end position="260"/>
    </location>
</feature>
<feature type="helix" evidence="6">
    <location>
        <begin position="265"/>
        <end position="270"/>
    </location>
</feature>
<feature type="strand" evidence="6">
    <location>
        <begin position="272"/>
        <end position="275"/>
    </location>
</feature>
<feature type="strand" evidence="6">
    <location>
        <begin position="278"/>
        <end position="281"/>
    </location>
</feature>
<feature type="strand" evidence="6">
    <location>
        <begin position="284"/>
        <end position="287"/>
    </location>
</feature>
<feature type="helix" evidence="6">
    <location>
        <begin position="297"/>
        <end position="304"/>
    </location>
</feature>
<feature type="strand" evidence="6">
    <location>
        <begin position="315"/>
        <end position="321"/>
    </location>
</feature>
<feature type="helix" evidence="6">
    <location>
        <begin position="325"/>
        <end position="334"/>
    </location>
</feature>
<feature type="helix" evidence="6">
    <location>
        <begin position="339"/>
        <end position="350"/>
    </location>
</feature>
<feature type="helix" evidence="6">
    <location>
        <begin position="365"/>
        <end position="368"/>
    </location>
</feature>
<feature type="strand" evidence="6">
    <location>
        <begin position="369"/>
        <end position="371"/>
    </location>
</feature>
<feature type="helix" evidence="6">
    <location>
        <begin position="378"/>
        <end position="401"/>
    </location>
</feature>
<feature type="turn" evidence="6">
    <location>
        <begin position="402"/>
        <end position="404"/>
    </location>
</feature>
<feature type="helix" evidence="6">
    <location>
        <begin position="409"/>
        <end position="424"/>
    </location>
</feature>
<feature type="helix" evidence="6">
    <location>
        <begin position="431"/>
        <end position="433"/>
    </location>
</feature>
<feature type="helix" evidence="6">
    <location>
        <begin position="434"/>
        <end position="439"/>
    </location>
</feature>
<feature type="helix" evidence="6">
    <location>
        <begin position="441"/>
        <end position="457"/>
    </location>
</feature>
<feature type="strand" evidence="6">
    <location>
        <begin position="471"/>
        <end position="473"/>
    </location>
</feature>
<feature type="strand" evidence="6">
    <location>
        <begin position="482"/>
        <end position="484"/>
    </location>
</feature>
<feature type="helix" evidence="6">
    <location>
        <begin position="486"/>
        <end position="501"/>
    </location>
</feature>
<feature type="turn" evidence="6">
    <location>
        <begin position="503"/>
        <end position="505"/>
    </location>
</feature>
<feature type="strand" evidence="6">
    <location>
        <begin position="512"/>
        <end position="514"/>
    </location>
</feature>
<feature type="strand" evidence="6">
    <location>
        <begin position="516"/>
        <end position="523"/>
    </location>
</feature>
<feature type="helix" evidence="6">
    <location>
        <begin position="532"/>
        <end position="550"/>
    </location>
</feature>
<feature type="helix" evidence="6">
    <location>
        <begin position="555"/>
        <end position="576"/>
    </location>
</feature>
<feature type="helix" evidence="6">
    <location>
        <begin position="577"/>
        <end position="579"/>
    </location>
</feature>
<feature type="strand" evidence="6">
    <location>
        <begin position="587"/>
        <end position="589"/>
    </location>
</feature>
<feature type="strand" evidence="6">
    <location>
        <begin position="595"/>
        <end position="597"/>
    </location>
</feature>
<evidence type="ECO:0000250" key="1"/>
<evidence type="ECO:0000250" key="2">
    <source>
        <dbReference type="UniProtKB" id="P81701"/>
    </source>
</evidence>
<evidence type="ECO:0000269" key="3">
    <source>
    </source>
</evidence>
<evidence type="ECO:0000305" key="4"/>
<evidence type="ECO:0007744" key="5">
    <source>
        <dbReference type="PDB" id="1UP8"/>
    </source>
</evidence>
<evidence type="ECO:0007829" key="6">
    <source>
        <dbReference type="PDB" id="1UP8"/>
    </source>
</evidence>
<proteinExistence type="evidence at protein level"/>
<name>PRXV_CORPI</name>